<accession>Q8X8N8</accession>
<organism>
    <name type="scientific">Escherichia coli O157:H7</name>
    <dbReference type="NCBI Taxonomy" id="83334"/>
    <lineage>
        <taxon>Bacteria</taxon>
        <taxon>Pseudomonadati</taxon>
        <taxon>Pseudomonadota</taxon>
        <taxon>Gammaproteobacteria</taxon>
        <taxon>Enterobacterales</taxon>
        <taxon>Enterobacteriaceae</taxon>
        <taxon>Escherichia</taxon>
    </lineage>
</organism>
<name>PYRC_ECO57</name>
<keyword id="KW-0378">Hydrolase</keyword>
<keyword id="KW-0479">Metal-binding</keyword>
<keyword id="KW-0665">Pyrimidine biosynthesis</keyword>
<keyword id="KW-1185">Reference proteome</keyword>
<keyword id="KW-0862">Zinc</keyword>
<reference key="1">
    <citation type="journal article" date="2001" name="Nature">
        <title>Genome sequence of enterohaemorrhagic Escherichia coli O157:H7.</title>
        <authorList>
            <person name="Perna N.T."/>
            <person name="Plunkett G. III"/>
            <person name="Burland V."/>
            <person name="Mau B."/>
            <person name="Glasner J.D."/>
            <person name="Rose D.J."/>
            <person name="Mayhew G.F."/>
            <person name="Evans P.S."/>
            <person name="Gregor J."/>
            <person name="Kirkpatrick H.A."/>
            <person name="Posfai G."/>
            <person name="Hackett J."/>
            <person name="Klink S."/>
            <person name="Boutin A."/>
            <person name="Shao Y."/>
            <person name="Miller L."/>
            <person name="Grotbeck E.J."/>
            <person name="Davis N.W."/>
            <person name="Lim A."/>
            <person name="Dimalanta E.T."/>
            <person name="Potamousis K."/>
            <person name="Apodaca J."/>
            <person name="Anantharaman T.S."/>
            <person name="Lin J."/>
            <person name="Yen G."/>
            <person name="Schwartz D.C."/>
            <person name="Welch R.A."/>
            <person name="Blattner F.R."/>
        </authorList>
    </citation>
    <scope>NUCLEOTIDE SEQUENCE [LARGE SCALE GENOMIC DNA]</scope>
    <source>
        <strain>O157:H7 / EDL933 / ATCC 700927 / EHEC</strain>
    </source>
</reference>
<reference key="2">
    <citation type="journal article" date="2001" name="DNA Res.">
        <title>Complete genome sequence of enterohemorrhagic Escherichia coli O157:H7 and genomic comparison with a laboratory strain K-12.</title>
        <authorList>
            <person name="Hayashi T."/>
            <person name="Makino K."/>
            <person name="Ohnishi M."/>
            <person name="Kurokawa K."/>
            <person name="Ishii K."/>
            <person name="Yokoyama K."/>
            <person name="Han C.-G."/>
            <person name="Ohtsubo E."/>
            <person name="Nakayama K."/>
            <person name="Murata T."/>
            <person name="Tanaka M."/>
            <person name="Tobe T."/>
            <person name="Iida T."/>
            <person name="Takami H."/>
            <person name="Honda T."/>
            <person name="Sasakawa C."/>
            <person name="Ogasawara N."/>
            <person name="Yasunaga T."/>
            <person name="Kuhara S."/>
            <person name="Shiba T."/>
            <person name="Hattori M."/>
            <person name="Shinagawa H."/>
        </authorList>
    </citation>
    <scope>NUCLEOTIDE SEQUENCE [LARGE SCALE GENOMIC DNA]</scope>
    <source>
        <strain>O157:H7 / Sakai / RIMD 0509952 / EHEC</strain>
    </source>
</reference>
<comment type="function">
    <text evidence="2">Catalyzes the reversible cyclization of carbamoyl aspartate to dihydroorotate.</text>
</comment>
<comment type="catalytic activity">
    <reaction evidence="2">
        <text>(S)-dihydroorotate + H2O = N-carbamoyl-L-aspartate + H(+)</text>
        <dbReference type="Rhea" id="RHEA:24296"/>
        <dbReference type="ChEBI" id="CHEBI:15377"/>
        <dbReference type="ChEBI" id="CHEBI:15378"/>
        <dbReference type="ChEBI" id="CHEBI:30864"/>
        <dbReference type="ChEBI" id="CHEBI:32814"/>
        <dbReference type="EC" id="3.5.2.3"/>
    </reaction>
</comment>
<comment type="cofactor">
    <cofactor evidence="2">
        <name>Zn(2+)</name>
        <dbReference type="ChEBI" id="CHEBI:29105"/>
    </cofactor>
    <text evidence="2">Binds 2 Zn(2+) ions per subunit.</text>
</comment>
<comment type="pathway">
    <text evidence="2">Pyrimidine metabolism; UMP biosynthesis via de novo pathway; (S)-dihydroorotate from bicarbonate: step 3/3.</text>
</comment>
<comment type="subunit">
    <text evidence="2">Homodimer.</text>
</comment>
<comment type="similarity">
    <text evidence="2">Belongs to the metallo-dependent hydrolases superfamily. DHOase family. Class II DHOase subfamily.</text>
</comment>
<protein>
    <recommendedName>
        <fullName evidence="2">Dihydroorotase</fullName>
        <shortName evidence="2">DHOase</shortName>
        <ecNumber evidence="2">3.5.2.3</ecNumber>
    </recommendedName>
</protein>
<dbReference type="EC" id="3.5.2.3" evidence="2"/>
<dbReference type="EMBL" id="AE005174">
    <property type="protein sequence ID" value="AAG55808.1"/>
    <property type="molecule type" value="Genomic_DNA"/>
</dbReference>
<dbReference type="EMBL" id="BA000007">
    <property type="protein sequence ID" value="BAB34863.1"/>
    <property type="molecule type" value="Genomic_DNA"/>
</dbReference>
<dbReference type="PIR" id="D85668">
    <property type="entry name" value="D85668"/>
</dbReference>
<dbReference type="PIR" id="H90808">
    <property type="entry name" value="H90808"/>
</dbReference>
<dbReference type="RefSeq" id="NP_309467.1">
    <property type="nucleotide sequence ID" value="NC_002695.1"/>
</dbReference>
<dbReference type="RefSeq" id="WP_000126564.1">
    <property type="nucleotide sequence ID" value="NZ_SWKA01000005.1"/>
</dbReference>
<dbReference type="SMR" id="Q8X8N8"/>
<dbReference type="STRING" id="155864.Z1699"/>
<dbReference type="MEROPS" id="M38.A02"/>
<dbReference type="GeneID" id="914110"/>
<dbReference type="KEGG" id="ece:Z1699"/>
<dbReference type="KEGG" id="ecs:ECs_1440"/>
<dbReference type="PATRIC" id="fig|386585.9.peg.1541"/>
<dbReference type="eggNOG" id="COG0418">
    <property type="taxonomic scope" value="Bacteria"/>
</dbReference>
<dbReference type="HOGENOM" id="CLU_041558_1_0_6"/>
<dbReference type="OMA" id="TLHHISM"/>
<dbReference type="UniPathway" id="UPA00070">
    <property type="reaction ID" value="UER00117"/>
</dbReference>
<dbReference type="Proteomes" id="UP000000558">
    <property type="component" value="Chromosome"/>
</dbReference>
<dbReference type="Proteomes" id="UP000002519">
    <property type="component" value="Chromosome"/>
</dbReference>
<dbReference type="GO" id="GO:0005829">
    <property type="term" value="C:cytosol"/>
    <property type="evidence" value="ECO:0007669"/>
    <property type="project" value="TreeGrafter"/>
</dbReference>
<dbReference type="GO" id="GO:0004151">
    <property type="term" value="F:dihydroorotase activity"/>
    <property type="evidence" value="ECO:0007669"/>
    <property type="project" value="UniProtKB-UniRule"/>
</dbReference>
<dbReference type="GO" id="GO:0008270">
    <property type="term" value="F:zinc ion binding"/>
    <property type="evidence" value="ECO:0007669"/>
    <property type="project" value="UniProtKB-UniRule"/>
</dbReference>
<dbReference type="GO" id="GO:0006207">
    <property type="term" value="P:'de novo' pyrimidine nucleobase biosynthetic process"/>
    <property type="evidence" value="ECO:0007669"/>
    <property type="project" value="TreeGrafter"/>
</dbReference>
<dbReference type="GO" id="GO:0044205">
    <property type="term" value="P:'de novo' UMP biosynthetic process"/>
    <property type="evidence" value="ECO:0007669"/>
    <property type="project" value="UniProtKB-UniRule"/>
</dbReference>
<dbReference type="CDD" id="cd01294">
    <property type="entry name" value="DHOase"/>
    <property type="match status" value="1"/>
</dbReference>
<dbReference type="FunFam" id="3.20.20.140:FF:000006">
    <property type="entry name" value="Dihydroorotase"/>
    <property type="match status" value="1"/>
</dbReference>
<dbReference type="Gene3D" id="3.20.20.140">
    <property type="entry name" value="Metal-dependent hydrolases"/>
    <property type="match status" value="1"/>
</dbReference>
<dbReference type="HAMAP" id="MF_00219">
    <property type="entry name" value="PyrC_classII"/>
    <property type="match status" value="1"/>
</dbReference>
<dbReference type="InterPro" id="IPR006680">
    <property type="entry name" value="Amidohydro-rel"/>
</dbReference>
<dbReference type="InterPro" id="IPR004721">
    <property type="entry name" value="DHOdimr"/>
</dbReference>
<dbReference type="InterPro" id="IPR002195">
    <property type="entry name" value="Dihydroorotase_CS"/>
</dbReference>
<dbReference type="InterPro" id="IPR032466">
    <property type="entry name" value="Metal_Hydrolase"/>
</dbReference>
<dbReference type="NCBIfam" id="TIGR00856">
    <property type="entry name" value="pyrC_dimer"/>
    <property type="match status" value="1"/>
</dbReference>
<dbReference type="PANTHER" id="PTHR43137">
    <property type="entry name" value="DIHYDROOROTASE"/>
    <property type="match status" value="1"/>
</dbReference>
<dbReference type="PANTHER" id="PTHR43137:SF1">
    <property type="entry name" value="DIHYDROOROTASE"/>
    <property type="match status" value="1"/>
</dbReference>
<dbReference type="Pfam" id="PF01979">
    <property type="entry name" value="Amidohydro_1"/>
    <property type="match status" value="1"/>
</dbReference>
<dbReference type="PIRSF" id="PIRSF001237">
    <property type="entry name" value="DHOdimr"/>
    <property type="match status" value="1"/>
</dbReference>
<dbReference type="SUPFAM" id="SSF51556">
    <property type="entry name" value="Metallo-dependent hydrolases"/>
    <property type="match status" value="1"/>
</dbReference>
<dbReference type="PROSITE" id="PS00482">
    <property type="entry name" value="DIHYDROOROTASE_1"/>
    <property type="match status" value="1"/>
</dbReference>
<dbReference type="PROSITE" id="PS00483">
    <property type="entry name" value="DIHYDROOROTASE_2"/>
    <property type="match status" value="1"/>
</dbReference>
<evidence type="ECO:0000250" key="1"/>
<evidence type="ECO:0000255" key="2">
    <source>
        <dbReference type="HAMAP-Rule" id="MF_00219"/>
    </source>
</evidence>
<proteinExistence type="inferred from homology"/>
<gene>
    <name evidence="2" type="primary">pyrC</name>
    <name type="ordered locus">Z1699</name>
    <name type="ordered locus">ECs1440</name>
</gene>
<feature type="initiator methionine" description="Removed" evidence="1">
    <location>
        <position position="1"/>
    </location>
</feature>
<feature type="chain" id="PRO_0000147207" description="Dihydroorotase">
    <location>
        <begin position="2"/>
        <end position="348"/>
    </location>
</feature>
<feature type="active site" evidence="2">
    <location>
        <position position="251"/>
    </location>
</feature>
<feature type="binding site" evidence="2">
    <location>
        <position position="17"/>
    </location>
    <ligand>
        <name>Zn(2+)</name>
        <dbReference type="ChEBI" id="CHEBI:29105"/>
        <label>1</label>
    </ligand>
</feature>
<feature type="binding site" evidence="2">
    <location>
        <begin position="19"/>
        <end position="21"/>
    </location>
    <ligand>
        <name>substrate</name>
    </ligand>
</feature>
<feature type="binding site" evidence="2">
    <location>
        <position position="19"/>
    </location>
    <ligand>
        <name>Zn(2+)</name>
        <dbReference type="ChEBI" id="CHEBI:29105"/>
        <label>1</label>
    </ligand>
</feature>
<feature type="binding site" evidence="2">
    <location>
        <position position="45"/>
    </location>
    <ligand>
        <name>substrate</name>
    </ligand>
</feature>
<feature type="binding site" description="via carbamate group" evidence="2">
    <location>
        <position position="103"/>
    </location>
    <ligand>
        <name>Zn(2+)</name>
        <dbReference type="ChEBI" id="CHEBI:29105"/>
        <label>1</label>
    </ligand>
</feature>
<feature type="binding site" description="via carbamate group" evidence="2">
    <location>
        <position position="103"/>
    </location>
    <ligand>
        <name>Zn(2+)</name>
        <dbReference type="ChEBI" id="CHEBI:29105"/>
        <label>2</label>
    </ligand>
</feature>
<feature type="binding site" evidence="2">
    <location>
        <position position="140"/>
    </location>
    <ligand>
        <name>substrate</name>
    </ligand>
</feature>
<feature type="binding site" evidence="2">
    <location>
        <position position="140"/>
    </location>
    <ligand>
        <name>Zn(2+)</name>
        <dbReference type="ChEBI" id="CHEBI:29105"/>
        <label>2</label>
    </ligand>
</feature>
<feature type="binding site" evidence="2">
    <location>
        <position position="178"/>
    </location>
    <ligand>
        <name>Zn(2+)</name>
        <dbReference type="ChEBI" id="CHEBI:29105"/>
        <label>2</label>
    </ligand>
</feature>
<feature type="binding site" evidence="2">
    <location>
        <position position="223"/>
    </location>
    <ligand>
        <name>substrate</name>
    </ligand>
</feature>
<feature type="binding site" evidence="2">
    <location>
        <position position="251"/>
    </location>
    <ligand>
        <name>Zn(2+)</name>
        <dbReference type="ChEBI" id="CHEBI:29105"/>
        <label>1</label>
    </ligand>
</feature>
<feature type="binding site" evidence="2">
    <location>
        <position position="255"/>
    </location>
    <ligand>
        <name>substrate</name>
    </ligand>
</feature>
<feature type="binding site" evidence="2">
    <location>
        <position position="267"/>
    </location>
    <ligand>
        <name>substrate</name>
    </ligand>
</feature>
<feature type="modified residue" description="N6-carboxylysine" evidence="2">
    <location>
        <position position="103"/>
    </location>
</feature>
<sequence>MTAPSQVLKIRRPDDWHLHLRDGDMLKTVVPYTSEIYGRAIVMPNLAPPVTTVEAAVAYRQRILHAVPAGHDFTPLMTCYLTDSLDPNELERGFNEGVFTAAKLYPANATTNSSHGVTSVDAIMPVLERMEKIGMPLLVHGEVTHADIDIFDREARFIESVMEPLRQRLTALKVVFEHITTKDAADYVRDGNERLAATITPQHLMFNRNHMLVGGVRPHLYCLPILKRNIHQQALRELVASGFNRVFLGTDSAPHARHRKESSCGCAGCFNAPTALGSYATVFEEMNALQHFEAFCSVNGPQFYGLPVNDTFIELVREEHQVAESIALTDDTLVPFLAGETVRWSVKQ</sequence>